<protein>
    <recommendedName>
        <fullName>DNA polymerase epsilon subunit C</fullName>
    </recommendedName>
    <alternativeName>
        <fullName>DNA polymerase II subunit C</fullName>
    </alternativeName>
</protein>
<name>DPB3_CANGA</name>
<sequence length="255" mass="28353">MSMSEEEKMVLQQKIRDRTPKLPISKVKRIGKVDPESILTSNMAYVATAFATELFVQSFVEQALFGAQLRRGKKKAGLRLTNDALVECVRNRDDYIFLEDVVRHIEKPKTSSGLHKLSAKPVGQGQEAEQKDASMEEDIPEEDLQEDDEMDVDETEPAERPAASKASDVNKASASAKSILSAFKYAPESAPQIHGSTQTEEDEGDEKEEDEDEEEEIDPEVQTQLQEVEKMNVVADLDEESEVSSDEDEASADDG</sequence>
<feature type="chain" id="PRO_0000208345" description="DNA polymerase epsilon subunit C">
    <location>
        <begin position="1"/>
        <end position="255"/>
    </location>
</feature>
<feature type="region of interest" description="Disordered" evidence="3">
    <location>
        <begin position="109"/>
        <end position="255"/>
    </location>
</feature>
<feature type="compositionally biased region" description="Acidic residues" evidence="3">
    <location>
        <begin position="135"/>
        <end position="156"/>
    </location>
</feature>
<feature type="compositionally biased region" description="Low complexity" evidence="3">
    <location>
        <begin position="171"/>
        <end position="184"/>
    </location>
</feature>
<feature type="compositionally biased region" description="Acidic residues" evidence="3">
    <location>
        <begin position="199"/>
        <end position="219"/>
    </location>
</feature>
<feature type="compositionally biased region" description="Acidic residues" evidence="3">
    <location>
        <begin position="236"/>
        <end position="255"/>
    </location>
</feature>
<comment type="function">
    <text evidence="2">As accessory component of the DNA polymerase epsilon (DNA polymerase II) participates in chromosomal DNA replication.</text>
</comment>
<comment type="subunit">
    <text evidence="1">Heterotetramer. Consists of four subunits: POL2, DPB2, DPB3 and DPB4 (By similarity).</text>
</comment>
<comment type="subcellular location">
    <subcellularLocation>
        <location evidence="1">Nucleus</location>
    </subcellularLocation>
</comment>
<comment type="miscellaneous">
    <text>In eukaryotes there are five DNA polymerases: alpha, beta, gamma, delta, and epsilon which are responsible for different reactions of DNA synthesis.</text>
</comment>
<proteinExistence type="inferred from homology"/>
<reference key="1">
    <citation type="journal article" date="2004" name="Nature">
        <title>Genome evolution in yeasts.</title>
        <authorList>
            <person name="Dujon B."/>
            <person name="Sherman D."/>
            <person name="Fischer G."/>
            <person name="Durrens P."/>
            <person name="Casaregola S."/>
            <person name="Lafontaine I."/>
            <person name="de Montigny J."/>
            <person name="Marck C."/>
            <person name="Neuveglise C."/>
            <person name="Talla E."/>
            <person name="Goffard N."/>
            <person name="Frangeul L."/>
            <person name="Aigle M."/>
            <person name="Anthouard V."/>
            <person name="Babour A."/>
            <person name="Barbe V."/>
            <person name="Barnay S."/>
            <person name="Blanchin S."/>
            <person name="Beckerich J.-M."/>
            <person name="Beyne E."/>
            <person name="Bleykasten C."/>
            <person name="Boisrame A."/>
            <person name="Boyer J."/>
            <person name="Cattolico L."/>
            <person name="Confanioleri F."/>
            <person name="de Daruvar A."/>
            <person name="Despons L."/>
            <person name="Fabre E."/>
            <person name="Fairhead C."/>
            <person name="Ferry-Dumazet H."/>
            <person name="Groppi A."/>
            <person name="Hantraye F."/>
            <person name="Hennequin C."/>
            <person name="Jauniaux N."/>
            <person name="Joyet P."/>
            <person name="Kachouri R."/>
            <person name="Kerrest A."/>
            <person name="Koszul R."/>
            <person name="Lemaire M."/>
            <person name="Lesur I."/>
            <person name="Ma L."/>
            <person name="Muller H."/>
            <person name="Nicaud J.-M."/>
            <person name="Nikolski M."/>
            <person name="Oztas S."/>
            <person name="Ozier-Kalogeropoulos O."/>
            <person name="Pellenz S."/>
            <person name="Potier S."/>
            <person name="Richard G.-F."/>
            <person name="Straub M.-L."/>
            <person name="Suleau A."/>
            <person name="Swennen D."/>
            <person name="Tekaia F."/>
            <person name="Wesolowski-Louvel M."/>
            <person name="Westhof E."/>
            <person name="Wirth B."/>
            <person name="Zeniou-Meyer M."/>
            <person name="Zivanovic Y."/>
            <person name="Bolotin-Fukuhara M."/>
            <person name="Thierry A."/>
            <person name="Bouchier C."/>
            <person name="Caudron B."/>
            <person name="Scarpelli C."/>
            <person name="Gaillardin C."/>
            <person name="Weissenbach J."/>
            <person name="Wincker P."/>
            <person name="Souciet J.-L."/>
        </authorList>
    </citation>
    <scope>NUCLEOTIDE SEQUENCE [LARGE SCALE GENOMIC DNA]</scope>
    <source>
        <strain>ATCC 2001 / BCRC 20586 / JCM 3761 / NBRC 0622 / NRRL Y-65 / CBS 138</strain>
    </source>
</reference>
<dbReference type="EMBL" id="CR380948">
    <property type="protein sequence ID" value="CAG58017.1"/>
    <property type="molecule type" value="Genomic_DNA"/>
</dbReference>
<dbReference type="RefSeq" id="XP_445117.1">
    <property type="nucleotide sequence ID" value="XM_445117.1"/>
</dbReference>
<dbReference type="SMR" id="Q6FXJ8"/>
<dbReference type="FunCoup" id="Q6FXJ8">
    <property type="interactions" value="114"/>
</dbReference>
<dbReference type="STRING" id="284593.Q6FXJ8"/>
<dbReference type="EnsemblFungi" id="CAGL0B03355g-T">
    <property type="protein sequence ID" value="CAGL0B03355g-T-p1"/>
    <property type="gene ID" value="CAGL0B03355g"/>
</dbReference>
<dbReference type="KEGG" id="cgr:2886501"/>
<dbReference type="CGD" id="CAL0127826">
    <property type="gene designation" value="CAGL0B03355g"/>
</dbReference>
<dbReference type="VEuPathDB" id="FungiDB:CAGL0B03355g"/>
<dbReference type="eggNOG" id="KOG1658">
    <property type="taxonomic scope" value="Eukaryota"/>
</dbReference>
<dbReference type="HOGENOM" id="CLU_1089889_0_0_1"/>
<dbReference type="InParanoid" id="Q6FXJ8"/>
<dbReference type="OMA" id="SNAAFMA"/>
<dbReference type="Proteomes" id="UP000002428">
    <property type="component" value="Chromosome B"/>
</dbReference>
<dbReference type="GO" id="GO:0008623">
    <property type="term" value="C:CHRAC"/>
    <property type="evidence" value="ECO:0007669"/>
    <property type="project" value="TreeGrafter"/>
</dbReference>
<dbReference type="GO" id="GO:0046982">
    <property type="term" value="F:protein heterodimerization activity"/>
    <property type="evidence" value="ECO:0007669"/>
    <property type="project" value="InterPro"/>
</dbReference>
<dbReference type="GO" id="GO:0006261">
    <property type="term" value="P:DNA-templated DNA replication"/>
    <property type="evidence" value="ECO:0007669"/>
    <property type="project" value="TreeGrafter"/>
</dbReference>
<dbReference type="CDD" id="cd22929">
    <property type="entry name" value="HFD_POLE4-like"/>
    <property type="match status" value="1"/>
</dbReference>
<dbReference type="Gene3D" id="1.10.20.10">
    <property type="entry name" value="Histone, subunit A"/>
    <property type="match status" value="1"/>
</dbReference>
<dbReference type="InterPro" id="IPR009072">
    <property type="entry name" value="Histone-fold"/>
</dbReference>
<dbReference type="InterPro" id="IPR050568">
    <property type="entry name" value="Transcr_DNA_Rep_Reg"/>
</dbReference>
<dbReference type="PANTHER" id="PTHR10252:SF54">
    <property type="entry name" value="CHROMATIN ACCESSIBILITY COMPLEX PROTEIN 1"/>
    <property type="match status" value="1"/>
</dbReference>
<dbReference type="PANTHER" id="PTHR10252">
    <property type="entry name" value="HISTONE-LIKE TRANSCRIPTION FACTOR CCAAT-RELATED"/>
    <property type="match status" value="1"/>
</dbReference>
<dbReference type="SUPFAM" id="SSF47113">
    <property type="entry name" value="Histone-fold"/>
    <property type="match status" value="1"/>
</dbReference>
<accession>Q6FXJ8</accession>
<evidence type="ECO:0000250" key="1"/>
<evidence type="ECO:0000250" key="2">
    <source>
        <dbReference type="UniProtKB" id="P27344"/>
    </source>
</evidence>
<evidence type="ECO:0000256" key="3">
    <source>
        <dbReference type="SAM" id="MobiDB-lite"/>
    </source>
</evidence>
<organism>
    <name type="scientific">Candida glabrata (strain ATCC 2001 / BCRC 20586 / JCM 3761 / NBRC 0622 / NRRL Y-65 / CBS 138)</name>
    <name type="common">Yeast</name>
    <name type="synonym">Nakaseomyces glabratus</name>
    <dbReference type="NCBI Taxonomy" id="284593"/>
    <lineage>
        <taxon>Eukaryota</taxon>
        <taxon>Fungi</taxon>
        <taxon>Dikarya</taxon>
        <taxon>Ascomycota</taxon>
        <taxon>Saccharomycotina</taxon>
        <taxon>Saccharomycetes</taxon>
        <taxon>Saccharomycetales</taxon>
        <taxon>Saccharomycetaceae</taxon>
        <taxon>Nakaseomyces</taxon>
    </lineage>
</organism>
<keyword id="KW-0235">DNA replication</keyword>
<keyword id="KW-0539">Nucleus</keyword>
<keyword id="KW-1185">Reference proteome</keyword>
<gene>
    <name type="primary">DPB3</name>
    <name type="ordered locus">CAGL0B03355g</name>
</gene>